<name>RL18A_NATPD</name>
<organism>
    <name type="scientific">Natronomonas pharaonis (strain ATCC 35678 / DSM 2160 / CIP 103997 / JCM 8858 / NBRC 14720 / NCIMB 2260 / Gabara)</name>
    <name type="common">Halobacterium pharaonis</name>
    <dbReference type="NCBI Taxonomy" id="348780"/>
    <lineage>
        <taxon>Archaea</taxon>
        <taxon>Methanobacteriati</taxon>
        <taxon>Methanobacteriota</taxon>
        <taxon>Stenosarchaea group</taxon>
        <taxon>Halobacteria</taxon>
        <taxon>Halobacteriales</taxon>
        <taxon>Haloarculaceae</taxon>
        <taxon>Natronomonas</taxon>
    </lineage>
</organism>
<dbReference type="EMBL" id="CR936257">
    <property type="protein sequence ID" value="CAI48184.1"/>
    <property type="molecule type" value="Genomic_DNA"/>
</dbReference>
<dbReference type="RefSeq" id="WP_011321823.1">
    <property type="nucleotide sequence ID" value="NC_007426.1"/>
</dbReference>
<dbReference type="SMR" id="Q3IUJ6"/>
<dbReference type="STRING" id="348780.NP_0186A"/>
<dbReference type="EnsemblBacteria" id="CAI48184">
    <property type="protein sequence ID" value="CAI48184"/>
    <property type="gene ID" value="NP_0186A"/>
</dbReference>
<dbReference type="GeneID" id="3703149"/>
<dbReference type="KEGG" id="nph:NP_0186A"/>
<dbReference type="eggNOG" id="arCOG04175">
    <property type="taxonomic scope" value="Archaea"/>
</dbReference>
<dbReference type="HOGENOM" id="CLU_177460_1_0_2"/>
<dbReference type="OrthoDB" id="191241at2157"/>
<dbReference type="Proteomes" id="UP000002698">
    <property type="component" value="Chromosome"/>
</dbReference>
<dbReference type="GO" id="GO:1990904">
    <property type="term" value="C:ribonucleoprotein complex"/>
    <property type="evidence" value="ECO:0007669"/>
    <property type="project" value="UniProtKB-KW"/>
</dbReference>
<dbReference type="GO" id="GO:0005840">
    <property type="term" value="C:ribosome"/>
    <property type="evidence" value="ECO:0007669"/>
    <property type="project" value="UniProtKB-KW"/>
</dbReference>
<dbReference type="GO" id="GO:0070180">
    <property type="term" value="F:large ribosomal subunit rRNA binding"/>
    <property type="evidence" value="ECO:0007669"/>
    <property type="project" value="UniProtKB-UniRule"/>
</dbReference>
<dbReference type="GO" id="GO:0003735">
    <property type="term" value="F:structural constituent of ribosome"/>
    <property type="evidence" value="ECO:0007669"/>
    <property type="project" value="InterPro"/>
</dbReference>
<dbReference type="GO" id="GO:0006412">
    <property type="term" value="P:translation"/>
    <property type="evidence" value="ECO:0007669"/>
    <property type="project" value="UniProtKB-UniRule"/>
</dbReference>
<dbReference type="Gene3D" id="3.10.20.10">
    <property type="match status" value="1"/>
</dbReference>
<dbReference type="HAMAP" id="MF_00273">
    <property type="entry name" value="Ribosomal_eL20"/>
    <property type="match status" value="1"/>
</dbReference>
<dbReference type="InterPro" id="IPR028877">
    <property type="entry name" value="Ribosomal_eL20"/>
</dbReference>
<dbReference type="InterPro" id="IPR023573">
    <property type="entry name" value="Ribosomal_eL20_dom"/>
</dbReference>
<dbReference type="NCBIfam" id="NF001981">
    <property type="entry name" value="PRK00773.1-1"/>
    <property type="match status" value="1"/>
</dbReference>
<dbReference type="Pfam" id="PF01775">
    <property type="entry name" value="Ribosomal_L18A"/>
    <property type="match status" value="1"/>
</dbReference>
<dbReference type="SUPFAM" id="SSF160374">
    <property type="entry name" value="RplX-like"/>
    <property type="match status" value="1"/>
</dbReference>
<proteinExistence type="inferred from homology"/>
<comment type="subunit">
    <text evidence="1">Part of the 50S ribosomal subunit. Binds 23S rRNA.</text>
</comment>
<comment type="similarity">
    <text evidence="1">Belongs to the eukaryotic ribosomal protein eL20 family.</text>
</comment>
<reference key="1">
    <citation type="journal article" date="2005" name="Genome Res.">
        <title>Living with two extremes: conclusions from the genome sequence of Natronomonas pharaonis.</title>
        <authorList>
            <person name="Falb M."/>
            <person name="Pfeiffer F."/>
            <person name="Palm P."/>
            <person name="Rodewald K."/>
            <person name="Hickmann V."/>
            <person name="Tittor J."/>
            <person name="Oesterhelt D."/>
        </authorList>
    </citation>
    <scope>NUCLEOTIDE SEQUENCE [LARGE SCALE GENOMIC DNA]</scope>
    <source>
        <strain>ATCC 35678 / DSM 2160 / CIP 103997 / JCM 8858 / NBRC 14720 / NCIMB 2260 / Gabara</strain>
    </source>
</reference>
<sequence length="57" mass="6547">MSEFTVRGRFPARYGEQNFEKNVEAPNEDVAQERVYANFGSQHGLKRTQITIDEVDA</sequence>
<gene>
    <name evidence="1" type="primary">rpl18a</name>
    <name evidence="1" type="synonym">rpl20e</name>
    <name evidence="1" type="synonym">rplX</name>
    <name type="ordered locus">NP_0186A</name>
</gene>
<evidence type="ECO:0000255" key="1">
    <source>
        <dbReference type="HAMAP-Rule" id="MF_00273"/>
    </source>
</evidence>
<evidence type="ECO:0000305" key="2"/>
<feature type="chain" id="PRO_0000419091" description="Large ribosomal subunit protein eL20">
    <location>
        <begin position="1"/>
        <end position="57"/>
    </location>
</feature>
<keyword id="KW-1185">Reference proteome</keyword>
<keyword id="KW-0687">Ribonucleoprotein</keyword>
<keyword id="KW-0689">Ribosomal protein</keyword>
<keyword id="KW-0694">RNA-binding</keyword>
<keyword id="KW-0699">rRNA-binding</keyword>
<protein>
    <recommendedName>
        <fullName evidence="1">Large ribosomal subunit protein eL20</fullName>
    </recommendedName>
    <alternativeName>
        <fullName evidence="2">50S ribosomal protein L18Ae</fullName>
    </alternativeName>
    <alternativeName>
        <fullName evidence="1">50S ribosomal protein L20e</fullName>
    </alternativeName>
    <alternativeName>
        <fullName evidence="1">50S ribosomal protein LX</fullName>
    </alternativeName>
</protein>
<accession>Q3IUJ6</accession>